<name>NH218_CAEEL</name>
<organism>
    <name type="scientific">Caenorhabditis elegans</name>
    <dbReference type="NCBI Taxonomy" id="6239"/>
    <lineage>
        <taxon>Eukaryota</taxon>
        <taxon>Metazoa</taxon>
        <taxon>Ecdysozoa</taxon>
        <taxon>Nematoda</taxon>
        <taxon>Chromadorea</taxon>
        <taxon>Rhabditida</taxon>
        <taxon>Rhabditina</taxon>
        <taxon>Rhabditomorpha</taxon>
        <taxon>Rhabditoidea</taxon>
        <taxon>Rhabditidae</taxon>
        <taxon>Peloderinae</taxon>
        <taxon>Caenorhabditis</taxon>
    </lineage>
</organism>
<sequence length="391" mass="46162">MVASSFQHHLEPMLTQPIPCQICTYQSHGVNFNVMTCRACAAFFRRSLVCGMRYHCKTRKNDCRIDSTERHFCRLCRFQKCLQMGMKAEKIQQNRDPISSTFPGTSTEPELSEIVDPENEKSYIFHGTLYGFKSLLAEVRYIFSISRNYSDSPLTDLENGFKLITRHQKRRYIDIEDRINFQNLTDFRLGHIKNCATWLTHSSFFQSLTETENLLILKSTWHVWSWLELLSVSVEIFGNQVCEEKIVFLSEKIAVDIVKVFRYILKPLNKQEKRKVEKELNPIFHILFDDVARKLQNLKPSSLEINYMLWQLVWFVAEKVLNEDNLRHGEQYTNQLASDLHNHYKNDLHLEQYAQRVLKMMAIVKSLQKHLMNIHKIIDYADNFCNLFAMK</sequence>
<protein>
    <recommendedName>
        <fullName>Nuclear hormone receptor family member nhr-218</fullName>
    </recommendedName>
</protein>
<evidence type="ECO:0000255" key="1">
    <source>
        <dbReference type="PROSITE-ProRule" id="PRU00407"/>
    </source>
</evidence>
<evidence type="ECO:0000255" key="2">
    <source>
        <dbReference type="PROSITE-ProRule" id="PRU01189"/>
    </source>
</evidence>
<evidence type="ECO:0000305" key="3"/>
<comment type="function">
    <text>Orphan nuclear receptor.</text>
</comment>
<comment type="subcellular location">
    <subcellularLocation>
        <location evidence="1">Nucleus</location>
    </subcellularLocation>
</comment>
<comment type="similarity">
    <text evidence="3">Belongs to the nuclear hormone receptor family.</text>
</comment>
<accession>O18086</accession>
<reference key="1">
    <citation type="journal article" date="1998" name="Science">
        <title>Genome sequence of the nematode C. elegans: a platform for investigating biology.</title>
        <authorList>
            <consortium name="The C. elegans sequencing consortium"/>
        </authorList>
    </citation>
    <scope>NUCLEOTIDE SEQUENCE [LARGE SCALE GENOMIC DNA]</scope>
    <source>
        <strain>Bristol N2</strain>
    </source>
</reference>
<feature type="chain" id="PRO_0000223607" description="Nuclear hormone receptor family member nhr-218">
    <location>
        <begin position="1"/>
        <end position="391"/>
    </location>
</feature>
<feature type="domain" description="NR LBD" evidence="2">
    <location>
        <begin position="146"/>
        <end position="391"/>
    </location>
</feature>
<feature type="DNA-binding region" description="Nuclear receptor" evidence="1">
    <location>
        <begin position="17"/>
        <end position="93"/>
    </location>
</feature>
<feature type="zinc finger region" description="NR C4-type" evidence="1">
    <location>
        <begin position="20"/>
        <end position="40"/>
    </location>
</feature>
<feature type="zinc finger region" description="NR C4-type" evidence="1">
    <location>
        <begin position="56"/>
        <end position="76"/>
    </location>
</feature>
<gene>
    <name type="primary">nhr-218</name>
    <name type="ORF">T13F3.2</name>
</gene>
<proteinExistence type="inferred from homology"/>
<dbReference type="EMBL" id="Z93389">
    <property type="protein sequence ID" value="CAB07670.2"/>
    <property type="molecule type" value="Genomic_DNA"/>
</dbReference>
<dbReference type="PIR" id="T24890">
    <property type="entry name" value="T24890"/>
</dbReference>
<dbReference type="RefSeq" id="NP_507103.2">
    <property type="nucleotide sequence ID" value="NM_074702.5"/>
</dbReference>
<dbReference type="SMR" id="O18086"/>
<dbReference type="FunCoup" id="O18086">
    <property type="interactions" value="167"/>
</dbReference>
<dbReference type="STRING" id="6239.T13F3.2a.1"/>
<dbReference type="PaxDb" id="6239-T13F3.2a"/>
<dbReference type="EnsemblMetazoa" id="T13F3.2a.1">
    <property type="protein sequence ID" value="T13F3.2a.1"/>
    <property type="gene ID" value="WBGene00011750"/>
</dbReference>
<dbReference type="GeneID" id="188479"/>
<dbReference type="KEGG" id="cel:CELE_T13F3.2"/>
<dbReference type="UCSC" id="T13F3.2">
    <property type="organism name" value="c. elegans"/>
</dbReference>
<dbReference type="AGR" id="WB:WBGene00011750"/>
<dbReference type="CTD" id="188479"/>
<dbReference type="WormBase" id="T13F3.2a">
    <property type="protein sequence ID" value="CE41022"/>
    <property type="gene ID" value="WBGene00011750"/>
    <property type="gene designation" value="nhr-218"/>
</dbReference>
<dbReference type="eggNOG" id="KOG3575">
    <property type="taxonomic scope" value="Eukaryota"/>
</dbReference>
<dbReference type="GeneTree" id="ENSGT00970000196028"/>
<dbReference type="HOGENOM" id="CLU_007368_7_0_1"/>
<dbReference type="InParanoid" id="O18086"/>
<dbReference type="OMA" id="ILKTTWH"/>
<dbReference type="OrthoDB" id="5815240at2759"/>
<dbReference type="PhylomeDB" id="O18086"/>
<dbReference type="PRO" id="PR:O18086"/>
<dbReference type="Proteomes" id="UP000001940">
    <property type="component" value="Chromosome V"/>
</dbReference>
<dbReference type="Bgee" id="WBGene00011750">
    <property type="expression patterns" value="Expressed in embryo"/>
</dbReference>
<dbReference type="GO" id="GO:0005634">
    <property type="term" value="C:nucleus"/>
    <property type="evidence" value="ECO:0007669"/>
    <property type="project" value="UniProtKB-SubCell"/>
</dbReference>
<dbReference type="GO" id="GO:0003700">
    <property type="term" value="F:DNA-binding transcription factor activity"/>
    <property type="evidence" value="ECO:0007669"/>
    <property type="project" value="InterPro"/>
</dbReference>
<dbReference type="GO" id="GO:0000978">
    <property type="term" value="F:RNA polymerase II cis-regulatory region sequence-specific DNA binding"/>
    <property type="evidence" value="ECO:0007669"/>
    <property type="project" value="InterPro"/>
</dbReference>
<dbReference type="GO" id="GO:0008270">
    <property type="term" value="F:zinc ion binding"/>
    <property type="evidence" value="ECO:0007669"/>
    <property type="project" value="UniProtKB-KW"/>
</dbReference>
<dbReference type="CDD" id="cd06960">
    <property type="entry name" value="NR_DBD_HNF4A"/>
    <property type="match status" value="1"/>
</dbReference>
<dbReference type="Gene3D" id="3.30.50.10">
    <property type="entry name" value="Erythroid Transcription Factor GATA-1, subunit A"/>
    <property type="match status" value="1"/>
</dbReference>
<dbReference type="Gene3D" id="1.10.565.10">
    <property type="entry name" value="Retinoid X Receptor"/>
    <property type="match status" value="1"/>
</dbReference>
<dbReference type="InterPro" id="IPR051152">
    <property type="entry name" value="C.elegans_Orphan_NR"/>
</dbReference>
<dbReference type="InterPro" id="IPR049636">
    <property type="entry name" value="HNF4-like_DBD"/>
</dbReference>
<dbReference type="InterPro" id="IPR035500">
    <property type="entry name" value="NHR-like_dom_sf"/>
</dbReference>
<dbReference type="InterPro" id="IPR000536">
    <property type="entry name" value="Nucl_hrmn_rcpt_lig-bd"/>
</dbReference>
<dbReference type="InterPro" id="IPR001628">
    <property type="entry name" value="Znf_hrmn_rcpt"/>
</dbReference>
<dbReference type="InterPro" id="IPR013088">
    <property type="entry name" value="Znf_NHR/GATA"/>
</dbReference>
<dbReference type="PANTHER" id="PTHR45680">
    <property type="entry name" value="NUCLEAR HORMONE RECEPTOR FAMILY"/>
    <property type="match status" value="1"/>
</dbReference>
<dbReference type="PANTHER" id="PTHR45680:SF26">
    <property type="entry name" value="NUCLEAR HORMONE RECEPTOR FAMILY MEMBER NHR-127-RELATED"/>
    <property type="match status" value="1"/>
</dbReference>
<dbReference type="Pfam" id="PF00104">
    <property type="entry name" value="Hormone_recep"/>
    <property type="match status" value="1"/>
</dbReference>
<dbReference type="Pfam" id="PF00105">
    <property type="entry name" value="zf-C4"/>
    <property type="match status" value="1"/>
</dbReference>
<dbReference type="PRINTS" id="PR00047">
    <property type="entry name" value="STROIDFINGER"/>
</dbReference>
<dbReference type="SMART" id="SM00430">
    <property type="entry name" value="HOLI"/>
    <property type="match status" value="1"/>
</dbReference>
<dbReference type="SMART" id="SM00399">
    <property type="entry name" value="ZnF_C4"/>
    <property type="match status" value="1"/>
</dbReference>
<dbReference type="SUPFAM" id="SSF57716">
    <property type="entry name" value="Glucocorticoid receptor-like (DNA-binding domain)"/>
    <property type="match status" value="1"/>
</dbReference>
<dbReference type="SUPFAM" id="SSF48508">
    <property type="entry name" value="Nuclear receptor ligand-binding domain"/>
    <property type="match status" value="1"/>
</dbReference>
<dbReference type="PROSITE" id="PS51843">
    <property type="entry name" value="NR_LBD"/>
    <property type="match status" value="1"/>
</dbReference>
<dbReference type="PROSITE" id="PS51030">
    <property type="entry name" value="NUCLEAR_REC_DBD_2"/>
    <property type="match status" value="1"/>
</dbReference>
<keyword id="KW-0238">DNA-binding</keyword>
<keyword id="KW-0479">Metal-binding</keyword>
<keyword id="KW-0539">Nucleus</keyword>
<keyword id="KW-0675">Receptor</keyword>
<keyword id="KW-1185">Reference proteome</keyword>
<keyword id="KW-0804">Transcription</keyword>
<keyword id="KW-0805">Transcription regulation</keyword>
<keyword id="KW-0862">Zinc</keyword>
<keyword id="KW-0863">Zinc-finger</keyword>